<feature type="chain" id="PRO_0000167925" description="Small ribosomal subunit protein bS20">
    <location>
        <begin position="1"/>
        <end position="86"/>
    </location>
</feature>
<dbReference type="EMBL" id="AE014295">
    <property type="protein sequence ID" value="AAN24662.1"/>
    <property type="molecule type" value="Genomic_DNA"/>
</dbReference>
<dbReference type="RefSeq" id="NP_696026.1">
    <property type="nucleotide sequence ID" value="NC_004307.2"/>
</dbReference>
<dbReference type="RefSeq" id="WP_007052167.1">
    <property type="nucleotide sequence ID" value="NC_004307.2"/>
</dbReference>
<dbReference type="SMR" id="Q8G602"/>
<dbReference type="STRING" id="206672.BL0849"/>
<dbReference type="EnsemblBacteria" id="AAN24662">
    <property type="protein sequence ID" value="AAN24662"/>
    <property type="gene ID" value="BL0849"/>
</dbReference>
<dbReference type="GeneID" id="69578011"/>
<dbReference type="KEGG" id="blo:BL0849"/>
<dbReference type="PATRIC" id="fig|206672.9.peg.543"/>
<dbReference type="HOGENOM" id="CLU_160655_0_1_11"/>
<dbReference type="PhylomeDB" id="Q8G602"/>
<dbReference type="Proteomes" id="UP000000439">
    <property type="component" value="Chromosome"/>
</dbReference>
<dbReference type="GO" id="GO:0005829">
    <property type="term" value="C:cytosol"/>
    <property type="evidence" value="ECO:0007669"/>
    <property type="project" value="TreeGrafter"/>
</dbReference>
<dbReference type="GO" id="GO:0015935">
    <property type="term" value="C:small ribosomal subunit"/>
    <property type="evidence" value="ECO:0007669"/>
    <property type="project" value="TreeGrafter"/>
</dbReference>
<dbReference type="GO" id="GO:0070181">
    <property type="term" value="F:small ribosomal subunit rRNA binding"/>
    <property type="evidence" value="ECO:0007669"/>
    <property type="project" value="TreeGrafter"/>
</dbReference>
<dbReference type="GO" id="GO:0003735">
    <property type="term" value="F:structural constituent of ribosome"/>
    <property type="evidence" value="ECO:0007669"/>
    <property type="project" value="InterPro"/>
</dbReference>
<dbReference type="GO" id="GO:0006412">
    <property type="term" value="P:translation"/>
    <property type="evidence" value="ECO:0007669"/>
    <property type="project" value="UniProtKB-UniRule"/>
</dbReference>
<dbReference type="FunFam" id="1.20.58.110:FF:000001">
    <property type="entry name" value="30S ribosomal protein S20"/>
    <property type="match status" value="1"/>
</dbReference>
<dbReference type="Gene3D" id="1.20.58.110">
    <property type="entry name" value="Ribosomal protein S20"/>
    <property type="match status" value="1"/>
</dbReference>
<dbReference type="HAMAP" id="MF_00500">
    <property type="entry name" value="Ribosomal_bS20"/>
    <property type="match status" value="1"/>
</dbReference>
<dbReference type="InterPro" id="IPR002583">
    <property type="entry name" value="Ribosomal_bS20"/>
</dbReference>
<dbReference type="InterPro" id="IPR036510">
    <property type="entry name" value="Ribosomal_bS20_sf"/>
</dbReference>
<dbReference type="NCBIfam" id="TIGR00029">
    <property type="entry name" value="S20"/>
    <property type="match status" value="1"/>
</dbReference>
<dbReference type="PANTHER" id="PTHR33398">
    <property type="entry name" value="30S RIBOSOMAL PROTEIN S20"/>
    <property type="match status" value="1"/>
</dbReference>
<dbReference type="PANTHER" id="PTHR33398:SF1">
    <property type="entry name" value="SMALL RIBOSOMAL SUBUNIT PROTEIN BS20C"/>
    <property type="match status" value="1"/>
</dbReference>
<dbReference type="Pfam" id="PF01649">
    <property type="entry name" value="Ribosomal_S20p"/>
    <property type="match status" value="1"/>
</dbReference>
<dbReference type="SUPFAM" id="SSF46992">
    <property type="entry name" value="Ribosomal protein S20"/>
    <property type="match status" value="1"/>
</dbReference>
<reference key="1">
    <citation type="journal article" date="2002" name="Proc. Natl. Acad. Sci. U.S.A.">
        <title>The genome sequence of Bifidobacterium longum reflects its adaptation to the human gastrointestinal tract.</title>
        <authorList>
            <person name="Schell M.A."/>
            <person name="Karmirantzou M."/>
            <person name="Snel B."/>
            <person name="Vilanova D."/>
            <person name="Berger B."/>
            <person name="Pessi G."/>
            <person name="Zwahlen M.-C."/>
            <person name="Desiere F."/>
            <person name="Bork P."/>
            <person name="Delley M."/>
            <person name="Pridmore R.D."/>
            <person name="Arigoni F."/>
        </authorList>
    </citation>
    <scope>NUCLEOTIDE SEQUENCE [LARGE SCALE GENOMIC DNA]</scope>
    <source>
        <strain>NCC 2705</strain>
    </source>
</reference>
<evidence type="ECO:0000255" key="1">
    <source>
        <dbReference type="HAMAP-Rule" id="MF_00500"/>
    </source>
</evidence>
<evidence type="ECO:0000305" key="2"/>
<name>RS20_BIFLO</name>
<organism>
    <name type="scientific">Bifidobacterium longum (strain NCC 2705)</name>
    <dbReference type="NCBI Taxonomy" id="206672"/>
    <lineage>
        <taxon>Bacteria</taxon>
        <taxon>Bacillati</taxon>
        <taxon>Actinomycetota</taxon>
        <taxon>Actinomycetes</taxon>
        <taxon>Bifidobacteriales</taxon>
        <taxon>Bifidobacteriaceae</taxon>
        <taxon>Bifidobacterium</taxon>
    </lineage>
</organism>
<sequence length="86" mass="8916">MANIKSQKKRVLTNEKAHLRNVAVKSGLKTAIRATREAIAAGDKAAAEAAYKVAAQKLDKAAGAGVIHKNQAANRKSGLAVAINAL</sequence>
<protein>
    <recommendedName>
        <fullName evidence="1">Small ribosomal subunit protein bS20</fullName>
    </recommendedName>
    <alternativeName>
        <fullName evidence="2">30S ribosomal protein S20</fullName>
    </alternativeName>
</protein>
<keyword id="KW-1185">Reference proteome</keyword>
<keyword id="KW-0687">Ribonucleoprotein</keyword>
<keyword id="KW-0689">Ribosomal protein</keyword>
<keyword id="KW-0694">RNA-binding</keyword>
<keyword id="KW-0699">rRNA-binding</keyword>
<proteinExistence type="inferred from homology"/>
<comment type="function">
    <text evidence="1">Binds directly to 16S ribosomal RNA.</text>
</comment>
<comment type="similarity">
    <text evidence="1">Belongs to the bacterial ribosomal protein bS20 family.</text>
</comment>
<gene>
    <name evidence="1" type="primary">rpsT</name>
    <name type="ordered locus">BL0849</name>
</gene>
<accession>Q8G602</accession>